<proteinExistence type="inferred from homology"/>
<reference key="1">
    <citation type="journal article" date="1998" name="Proc. Natl. Acad. Sci. U.S.A.">
        <title>Identification and characterization of amelogenin genes in monotremes, reptiles, and amphibians.</title>
        <authorList>
            <person name="Toyosawa S."/>
            <person name="O'Huigin C."/>
            <person name="Figueroa F."/>
            <person name="Tichy H."/>
            <person name="Klein J."/>
        </authorList>
    </citation>
    <scope>NUCLEOTIDE SEQUENCE [GENOMIC DNA]</scope>
</reference>
<name>AMEL_TACAC</name>
<gene>
    <name type="primary">AMEL</name>
</gene>
<sequence length="121" mass="13609">LHHQIIPVLSQHQTPTHALQSHHHIPVMATQQPTQPPQPMMPMPGQHSVTPTQHHQSNLPQPGQQPFQPQFPQKPTHRPIQPQAPVHPMPPMPQPQLPPMFPLQPLPPLLPDLPLEPWPAS</sequence>
<evidence type="ECO:0000250" key="1"/>
<evidence type="ECO:0000256" key="2">
    <source>
        <dbReference type="SAM" id="MobiDB-lite"/>
    </source>
</evidence>
<evidence type="ECO:0000305" key="3"/>
<comment type="function">
    <text evidence="1">Plays a role in the biomineralization of teeth. Seems to regulate the formation of crystallites during the secretory stage of tooth enamel development. Thought to play a major role in the structural organization and mineralization of developing enamel (By similarity).</text>
</comment>
<comment type="subcellular location">
    <subcellularLocation>
        <location>Secreted</location>
        <location>Extracellular space</location>
        <location>Extracellular matrix</location>
    </subcellularLocation>
</comment>
<comment type="similarity">
    <text evidence="3">Belongs to the amelogenin family.</text>
</comment>
<protein>
    <recommendedName>
        <fullName>Amelogenin</fullName>
    </recommendedName>
</protein>
<dbReference type="EMBL" id="AF095567">
    <property type="protein sequence ID" value="AAC78132.1"/>
    <property type="molecule type" value="Genomic_DNA"/>
</dbReference>
<dbReference type="GO" id="GO:0005576">
    <property type="term" value="C:extracellular region"/>
    <property type="evidence" value="ECO:0007669"/>
    <property type="project" value="UniProtKB-KW"/>
</dbReference>
<dbReference type="GO" id="GO:0030345">
    <property type="term" value="F:structural constituent of tooth enamel"/>
    <property type="evidence" value="ECO:0007669"/>
    <property type="project" value="TreeGrafter"/>
</dbReference>
<dbReference type="GO" id="GO:0070166">
    <property type="term" value="P:enamel mineralization"/>
    <property type="evidence" value="ECO:0007669"/>
    <property type="project" value="TreeGrafter"/>
</dbReference>
<dbReference type="InterPro" id="IPR004116">
    <property type="entry name" value="Amelogenin"/>
</dbReference>
<dbReference type="PANTHER" id="PTHR46794:SF2">
    <property type="entry name" value="AMELOGENIN, X ISOFORM"/>
    <property type="match status" value="1"/>
</dbReference>
<dbReference type="PANTHER" id="PTHR46794">
    <property type="entry name" value="AMELOGENIN, Y ISOFORM"/>
    <property type="match status" value="1"/>
</dbReference>
<dbReference type="Pfam" id="PF02948">
    <property type="entry name" value="Amelogenin"/>
    <property type="match status" value="1"/>
</dbReference>
<dbReference type="PRINTS" id="PR01757">
    <property type="entry name" value="AMELOGENIN"/>
</dbReference>
<dbReference type="SMART" id="SM00818">
    <property type="entry name" value="Amelogenin"/>
    <property type="match status" value="1"/>
</dbReference>
<keyword id="KW-0091">Biomineralization</keyword>
<keyword id="KW-0272">Extracellular matrix</keyword>
<keyword id="KW-0677">Repeat</keyword>
<keyword id="KW-0964">Secreted</keyword>
<organism>
    <name type="scientific">Tachyglossus aculeatus aculeatus</name>
    <name type="common">Southeast Australian short-beaked echidna</name>
    <dbReference type="NCBI Taxonomy" id="49271"/>
    <lineage>
        <taxon>Eukaryota</taxon>
        <taxon>Metazoa</taxon>
        <taxon>Chordata</taxon>
        <taxon>Craniata</taxon>
        <taxon>Vertebrata</taxon>
        <taxon>Euteleostomi</taxon>
        <taxon>Mammalia</taxon>
        <taxon>Monotremata</taxon>
        <taxon>Tachyglossidae</taxon>
        <taxon>Tachyglossus</taxon>
    </lineage>
</organism>
<accession>O97647</accession>
<feature type="chain" id="PRO_0000144065" description="Amelogenin">
    <location>
        <begin position="1" status="less than"/>
        <end position="121" status="greater than"/>
    </location>
</feature>
<feature type="region of interest" description="Disordered" evidence="2">
    <location>
        <begin position="1"/>
        <end position="121"/>
    </location>
</feature>
<feature type="compositionally biased region" description="Polar residues" evidence="2">
    <location>
        <begin position="10"/>
        <end position="19"/>
    </location>
</feature>
<feature type="compositionally biased region" description="Polar residues" evidence="2">
    <location>
        <begin position="47"/>
        <end position="59"/>
    </location>
</feature>
<feature type="compositionally biased region" description="Low complexity" evidence="2">
    <location>
        <begin position="60"/>
        <end position="84"/>
    </location>
</feature>
<feature type="compositionally biased region" description="Pro residues" evidence="2">
    <location>
        <begin position="85"/>
        <end position="121"/>
    </location>
</feature>
<feature type="non-terminal residue">
    <location>
        <position position="1"/>
    </location>
</feature>
<feature type="non-terminal residue">
    <location>
        <position position="121"/>
    </location>
</feature>